<evidence type="ECO:0000255" key="1">
    <source>
        <dbReference type="HAMAP-Rule" id="MF_00107"/>
    </source>
</evidence>
<accession>A7MJ58</accession>
<keyword id="KW-0414">Isoprene biosynthesis</keyword>
<keyword id="KW-0456">Lyase</keyword>
<keyword id="KW-0479">Metal-binding</keyword>
<keyword id="KW-1185">Reference proteome</keyword>
<name>ISPF_CROS8</name>
<sequence length="159" mass="16757">MRIGHGFDVHAFGGTGPIILGGVRIPYEQGLLAHSDGDVALHALTDALLGAAALGDIGKLFPDTDPAFKGADSRELLREAWRRIQAKGYTLGNVDVTIIAQAPKMAPHIPQMRVFIAEDLGCHMDQVNVKATTTEKLGFTGRGEGIACEAVALLMKAGA</sequence>
<protein>
    <recommendedName>
        <fullName evidence="1">2-C-methyl-D-erythritol 2,4-cyclodiphosphate synthase</fullName>
        <shortName evidence="1">MECDP-synthase</shortName>
        <shortName evidence="1">MECPP-synthase</shortName>
        <shortName evidence="1">MECPS</shortName>
        <ecNumber evidence="1">4.6.1.12</ecNumber>
    </recommendedName>
</protein>
<feature type="chain" id="PRO_1000022834" description="2-C-methyl-D-erythritol 2,4-cyclodiphosphate synthase">
    <location>
        <begin position="1"/>
        <end position="159"/>
    </location>
</feature>
<feature type="binding site" evidence="1">
    <location>
        <begin position="8"/>
        <end position="10"/>
    </location>
    <ligand>
        <name>4-CDP-2-C-methyl-D-erythritol 2-phosphate</name>
        <dbReference type="ChEBI" id="CHEBI:57919"/>
    </ligand>
</feature>
<feature type="binding site" evidence="1">
    <location>
        <position position="8"/>
    </location>
    <ligand>
        <name>a divalent metal cation</name>
        <dbReference type="ChEBI" id="CHEBI:60240"/>
    </ligand>
</feature>
<feature type="binding site" evidence="1">
    <location>
        <position position="10"/>
    </location>
    <ligand>
        <name>a divalent metal cation</name>
        <dbReference type="ChEBI" id="CHEBI:60240"/>
    </ligand>
</feature>
<feature type="binding site" evidence="1">
    <location>
        <begin position="34"/>
        <end position="35"/>
    </location>
    <ligand>
        <name>4-CDP-2-C-methyl-D-erythritol 2-phosphate</name>
        <dbReference type="ChEBI" id="CHEBI:57919"/>
    </ligand>
</feature>
<feature type="binding site" evidence="1">
    <location>
        <position position="42"/>
    </location>
    <ligand>
        <name>a divalent metal cation</name>
        <dbReference type="ChEBI" id="CHEBI:60240"/>
    </ligand>
</feature>
<feature type="binding site" evidence="1">
    <location>
        <begin position="56"/>
        <end position="58"/>
    </location>
    <ligand>
        <name>4-CDP-2-C-methyl-D-erythritol 2-phosphate</name>
        <dbReference type="ChEBI" id="CHEBI:57919"/>
    </ligand>
</feature>
<feature type="binding site" evidence="1">
    <location>
        <begin position="61"/>
        <end position="65"/>
    </location>
    <ligand>
        <name>4-CDP-2-C-methyl-D-erythritol 2-phosphate</name>
        <dbReference type="ChEBI" id="CHEBI:57919"/>
    </ligand>
</feature>
<feature type="binding site" evidence="1">
    <location>
        <begin position="100"/>
        <end position="106"/>
    </location>
    <ligand>
        <name>4-CDP-2-C-methyl-D-erythritol 2-phosphate</name>
        <dbReference type="ChEBI" id="CHEBI:57919"/>
    </ligand>
</feature>
<feature type="binding site" evidence="1">
    <location>
        <begin position="132"/>
        <end position="135"/>
    </location>
    <ligand>
        <name>4-CDP-2-C-methyl-D-erythritol 2-phosphate</name>
        <dbReference type="ChEBI" id="CHEBI:57919"/>
    </ligand>
</feature>
<feature type="binding site" evidence="1">
    <location>
        <position position="139"/>
    </location>
    <ligand>
        <name>4-CDP-2-C-methyl-D-erythritol 2-phosphate</name>
        <dbReference type="ChEBI" id="CHEBI:57919"/>
    </ligand>
</feature>
<feature type="binding site" evidence="1">
    <location>
        <position position="142"/>
    </location>
    <ligand>
        <name>4-CDP-2-C-methyl-D-erythritol 2-phosphate</name>
        <dbReference type="ChEBI" id="CHEBI:57919"/>
    </ligand>
</feature>
<feature type="site" description="Transition state stabilizer" evidence="1">
    <location>
        <position position="34"/>
    </location>
</feature>
<feature type="site" description="Transition state stabilizer" evidence="1">
    <location>
        <position position="133"/>
    </location>
</feature>
<organism>
    <name type="scientific">Cronobacter sakazakii (strain ATCC BAA-894)</name>
    <name type="common">Enterobacter sakazakii</name>
    <dbReference type="NCBI Taxonomy" id="290339"/>
    <lineage>
        <taxon>Bacteria</taxon>
        <taxon>Pseudomonadati</taxon>
        <taxon>Pseudomonadota</taxon>
        <taxon>Gammaproteobacteria</taxon>
        <taxon>Enterobacterales</taxon>
        <taxon>Enterobacteriaceae</taxon>
        <taxon>Cronobacter</taxon>
    </lineage>
</organism>
<reference key="1">
    <citation type="journal article" date="2010" name="PLoS ONE">
        <title>Genome sequence of Cronobacter sakazakii BAA-894 and comparative genomic hybridization analysis with other Cronobacter species.</title>
        <authorList>
            <person name="Kucerova E."/>
            <person name="Clifton S.W."/>
            <person name="Xia X.Q."/>
            <person name="Long F."/>
            <person name="Porwollik S."/>
            <person name="Fulton L."/>
            <person name="Fronick C."/>
            <person name="Minx P."/>
            <person name="Kyung K."/>
            <person name="Warren W."/>
            <person name="Fulton R."/>
            <person name="Feng D."/>
            <person name="Wollam A."/>
            <person name="Shah N."/>
            <person name="Bhonagiri V."/>
            <person name="Nash W.E."/>
            <person name="Hallsworth-Pepin K."/>
            <person name="Wilson R.K."/>
            <person name="McClelland M."/>
            <person name="Forsythe S.J."/>
        </authorList>
    </citation>
    <scope>NUCLEOTIDE SEQUENCE [LARGE SCALE GENOMIC DNA]</scope>
    <source>
        <strain>ATCC BAA-894</strain>
    </source>
</reference>
<comment type="function">
    <text evidence="1">Involved in the biosynthesis of isopentenyl diphosphate (IPP) and dimethylallyl diphosphate (DMAPP), two major building blocks of isoprenoid compounds. Catalyzes the conversion of 4-diphosphocytidyl-2-C-methyl-D-erythritol 2-phosphate (CDP-ME2P) to 2-C-methyl-D-erythritol 2,4-cyclodiphosphate (ME-CPP) with a corresponding release of cytidine 5-monophosphate (CMP).</text>
</comment>
<comment type="catalytic activity">
    <reaction evidence="1">
        <text>4-CDP-2-C-methyl-D-erythritol 2-phosphate = 2-C-methyl-D-erythritol 2,4-cyclic diphosphate + CMP</text>
        <dbReference type="Rhea" id="RHEA:23864"/>
        <dbReference type="ChEBI" id="CHEBI:57919"/>
        <dbReference type="ChEBI" id="CHEBI:58483"/>
        <dbReference type="ChEBI" id="CHEBI:60377"/>
        <dbReference type="EC" id="4.6.1.12"/>
    </reaction>
</comment>
<comment type="cofactor">
    <cofactor evidence="1">
        <name>a divalent metal cation</name>
        <dbReference type="ChEBI" id="CHEBI:60240"/>
    </cofactor>
    <text evidence="1">Binds 1 divalent metal cation per subunit.</text>
</comment>
<comment type="pathway">
    <text evidence="1">Isoprenoid biosynthesis; isopentenyl diphosphate biosynthesis via DXP pathway; isopentenyl diphosphate from 1-deoxy-D-xylulose 5-phosphate: step 4/6.</text>
</comment>
<comment type="subunit">
    <text evidence="1">Homotrimer.</text>
</comment>
<comment type="similarity">
    <text evidence="1">Belongs to the IspF family.</text>
</comment>
<proteinExistence type="inferred from homology"/>
<gene>
    <name evidence="1" type="primary">ispF</name>
    <name type="ordered locus">ESA_00545</name>
</gene>
<dbReference type="EC" id="4.6.1.12" evidence="1"/>
<dbReference type="EMBL" id="CP000783">
    <property type="protein sequence ID" value="ABU75836.1"/>
    <property type="molecule type" value="Genomic_DNA"/>
</dbReference>
<dbReference type="RefSeq" id="WP_007851809.1">
    <property type="nucleotide sequence ID" value="NC_009778.1"/>
</dbReference>
<dbReference type="SMR" id="A7MJ58"/>
<dbReference type="GeneID" id="56729445"/>
<dbReference type="KEGG" id="esa:ESA_00545"/>
<dbReference type="HOGENOM" id="CLU_084630_2_0_6"/>
<dbReference type="UniPathway" id="UPA00056">
    <property type="reaction ID" value="UER00095"/>
</dbReference>
<dbReference type="Proteomes" id="UP000000260">
    <property type="component" value="Chromosome"/>
</dbReference>
<dbReference type="GO" id="GO:0008685">
    <property type="term" value="F:2-C-methyl-D-erythritol 2,4-cyclodiphosphate synthase activity"/>
    <property type="evidence" value="ECO:0007669"/>
    <property type="project" value="UniProtKB-UniRule"/>
</dbReference>
<dbReference type="GO" id="GO:0046872">
    <property type="term" value="F:metal ion binding"/>
    <property type="evidence" value="ECO:0007669"/>
    <property type="project" value="UniProtKB-KW"/>
</dbReference>
<dbReference type="GO" id="GO:0019288">
    <property type="term" value="P:isopentenyl diphosphate biosynthetic process, methylerythritol 4-phosphate pathway"/>
    <property type="evidence" value="ECO:0007669"/>
    <property type="project" value="UniProtKB-UniRule"/>
</dbReference>
<dbReference type="GO" id="GO:0016114">
    <property type="term" value="P:terpenoid biosynthetic process"/>
    <property type="evidence" value="ECO:0007669"/>
    <property type="project" value="InterPro"/>
</dbReference>
<dbReference type="CDD" id="cd00554">
    <property type="entry name" value="MECDP_synthase"/>
    <property type="match status" value="1"/>
</dbReference>
<dbReference type="FunFam" id="3.30.1330.50:FF:000001">
    <property type="entry name" value="2-C-methyl-D-erythritol 2,4-cyclodiphosphate synthase"/>
    <property type="match status" value="1"/>
</dbReference>
<dbReference type="Gene3D" id="3.30.1330.50">
    <property type="entry name" value="2-C-methyl-D-erythritol 2,4-cyclodiphosphate synthase"/>
    <property type="match status" value="1"/>
</dbReference>
<dbReference type="HAMAP" id="MF_00107">
    <property type="entry name" value="IspF"/>
    <property type="match status" value="1"/>
</dbReference>
<dbReference type="InterPro" id="IPR003526">
    <property type="entry name" value="MECDP_synthase"/>
</dbReference>
<dbReference type="InterPro" id="IPR020555">
    <property type="entry name" value="MECDP_synthase_CS"/>
</dbReference>
<dbReference type="InterPro" id="IPR036571">
    <property type="entry name" value="MECDP_synthase_sf"/>
</dbReference>
<dbReference type="NCBIfam" id="TIGR00151">
    <property type="entry name" value="ispF"/>
    <property type="match status" value="1"/>
</dbReference>
<dbReference type="PANTHER" id="PTHR43181">
    <property type="entry name" value="2-C-METHYL-D-ERYTHRITOL 2,4-CYCLODIPHOSPHATE SYNTHASE, CHLOROPLASTIC"/>
    <property type="match status" value="1"/>
</dbReference>
<dbReference type="PANTHER" id="PTHR43181:SF1">
    <property type="entry name" value="2-C-METHYL-D-ERYTHRITOL 2,4-CYCLODIPHOSPHATE SYNTHASE, CHLOROPLASTIC"/>
    <property type="match status" value="1"/>
</dbReference>
<dbReference type="Pfam" id="PF02542">
    <property type="entry name" value="YgbB"/>
    <property type="match status" value="1"/>
</dbReference>
<dbReference type="SUPFAM" id="SSF69765">
    <property type="entry name" value="IpsF-like"/>
    <property type="match status" value="1"/>
</dbReference>
<dbReference type="PROSITE" id="PS01350">
    <property type="entry name" value="ISPF"/>
    <property type="match status" value="1"/>
</dbReference>